<accession>A0QYE2</accession>
<accession>I7FEV8</accession>
<comment type="catalytic activity">
    <reaction evidence="1">
        <text>urea + 2 H2O + H(+) = hydrogencarbonate + 2 NH4(+)</text>
        <dbReference type="Rhea" id="RHEA:20557"/>
        <dbReference type="ChEBI" id="CHEBI:15377"/>
        <dbReference type="ChEBI" id="CHEBI:15378"/>
        <dbReference type="ChEBI" id="CHEBI:16199"/>
        <dbReference type="ChEBI" id="CHEBI:17544"/>
        <dbReference type="ChEBI" id="CHEBI:28938"/>
        <dbReference type="EC" id="3.5.1.5"/>
    </reaction>
</comment>
<comment type="pathway">
    <text evidence="1">Nitrogen metabolism; urea degradation; CO(2) and NH(3) from urea (urease route): step 1/1.</text>
</comment>
<comment type="subunit">
    <text evidence="1">Heterotrimer of UreA (gamma), UreB (beta) and UreC (alpha) subunits. Three heterotrimers associate to form the active enzyme.</text>
</comment>
<comment type="subcellular location">
    <subcellularLocation>
        <location evidence="1">Cytoplasm</location>
    </subcellularLocation>
</comment>
<comment type="similarity">
    <text evidence="1">Belongs to the urease gamma subunit family.</text>
</comment>
<proteinExistence type="inferred from homology"/>
<protein>
    <recommendedName>
        <fullName evidence="1">Urease subunit gamma</fullName>
        <ecNumber evidence="1">3.5.1.5</ecNumber>
    </recommendedName>
    <alternativeName>
        <fullName evidence="1">Urea amidohydrolase subunit gamma</fullName>
    </alternativeName>
</protein>
<keyword id="KW-0963">Cytoplasm</keyword>
<keyword id="KW-0378">Hydrolase</keyword>
<keyword id="KW-1185">Reference proteome</keyword>
<evidence type="ECO:0000255" key="1">
    <source>
        <dbReference type="HAMAP-Rule" id="MF_00739"/>
    </source>
</evidence>
<feature type="chain" id="PRO_1000046338" description="Urease subunit gamma">
    <location>
        <begin position="1"/>
        <end position="100"/>
    </location>
</feature>
<gene>
    <name evidence="1" type="primary">ureA</name>
    <name type="ordered locus">MSMEG_3627</name>
    <name type="ordered locus">MSMEI_3542</name>
</gene>
<organism>
    <name type="scientific">Mycolicibacterium smegmatis (strain ATCC 700084 / mc(2)155)</name>
    <name type="common">Mycobacterium smegmatis</name>
    <dbReference type="NCBI Taxonomy" id="246196"/>
    <lineage>
        <taxon>Bacteria</taxon>
        <taxon>Bacillati</taxon>
        <taxon>Actinomycetota</taxon>
        <taxon>Actinomycetes</taxon>
        <taxon>Mycobacteriales</taxon>
        <taxon>Mycobacteriaceae</taxon>
        <taxon>Mycolicibacterium</taxon>
    </lineage>
</organism>
<name>URE3_MYCS2</name>
<sequence>MRLTPHEQDRLLISYAAELARRRRARGLRLNHPEAVAVITDHLLEGARDGRTVAELMVSGRSVLTRDDVMDGVPEMLHDVQVEATFPDGTKLVTVHQPIA</sequence>
<reference key="1">
    <citation type="submission" date="2006-10" db="EMBL/GenBank/DDBJ databases">
        <authorList>
            <person name="Fleischmann R.D."/>
            <person name="Dodson R.J."/>
            <person name="Haft D.H."/>
            <person name="Merkel J.S."/>
            <person name="Nelson W.C."/>
            <person name="Fraser C.M."/>
        </authorList>
    </citation>
    <scope>NUCLEOTIDE SEQUENCE [LARGE SCALE GENOMIC DNA]</scope>
    <source>
        <strain>ATCC 700084 / mc(2)155</strain>
    </source>
</reference>
<reference key="2">
    <citation type="journal article" date="2007" name="Genome Biol.">
        <title>Interrupted coding sequences in Mycobacterium smegmatis: authentic mutations or sequencing errors?</title>
        <authorList>
            <person name="Deshayes C."/>
            <person name="Perrodou E."/>
            <person name="Gallien S."/>
            <person name="Euphrasie D."/>
            <person name="Schaeffer C."/>
            <person name="Van-Dorsselaer A."/>
            <person name="Poch O."/>
            <person name="Lecompte O."/>
            <person name="Reyrat J.-M."/>
        </authorList>
    </citation>
    <scope>NUCLEOTIDE SEQUENCE [LARGE SCALE GENOMIC DNA]</scope>
    <source>
        <strain>ATCC 700084 / mc(2)155</strain>
    </source>
</reference>
<reference key="3">
    <citation type="journal article" date="2009" name="Genome Res.">
        <title>Ortho-proteogenomics: multiple proteomes investigation through orthology and a new MS-based protocol.</title>
        <authorList>
            <person name="Gallien S."/>
            <person name="Perrodou E."/>
            <person name="Carapito C."/>
            <person name="Deshayes C."/>
            <person name="Reyrat J.-M."/>
            <person name="Van Dorsselaer A."/>
            <person name="Poch O."/>
            <person name="Schaeffer C."/>
            <person name="Lecompte O."/>
        </authorList>
    </citation>
    <scope>NUCLEOTIDE SEQUENCE [LARGE SCALE GENOMIC DNA]</scope>
    <source>
        <strain>ATCC 700084 / mc(2)155</strain>
    </source>
</reference>
<dbReference type="EC" id="3.5.1.5" evidence="1"/>
<dbReference type="EMBL" id="CP000480">
    <property type="protein sequence ID" value="ABK74952.1"/>
    <property type="molecule type" value="Genomic_DNA"/>
</dbReference>
<dbReference type="EMBL" id="CP001663">
    <property type="protein sequence ID" value="AFP40005.1"/>
    <property type="molecule type" value="Genomic_DNA"/>
</dbReference>
<dbReference type="RefSeq" id="WP_011729214.1">
    <property type="nucleotide sequence ID" value="NZ_SIJM01000008.1"/>
</dbReference>
<dbReference type="RefSeq" id="YP_887930.1">
    <property type="nucleotide sequence ID" value="NC_008596.1"/>
</dbReference>
<dbReference type="SMR" id="A0QYE2"/>
<dbReference type="STRING" id="246196.MSMEG_3627"/>
<dbReference type="PaxDb" id="246196-MSMEI_3542"/>
<dbReference type="KEGG" id="msb:LJ00_18035"/>
<dbReference type="KEGG" id="msg:MSMEI_3542"/>
<dbReference type="KEGG" id="msm:MSMEG_3627"/>
<dbReference type="PATRIC" id="fig|246196.19.peg.3575"/>
<dbReference type="eggNOG" id="COG0831">
    <property type="taxonomic scope" value="Bacteria"/>
</dbReference>
<dbReference type="OrthoDB" id="9797217at2"/>
<dbReference type="UniPathway" id="UPA00258">
    <property type="reaction ID" value="UER00370"/>
</dbReference>
<dbReference type="Proteomes" id="UP000000757">
    <property type="component" value="Chromosome"/>
</dbReference>
<dbReference type="Proteomes" id="UP000006158">
    <property type="component" value="Chromosome"/>
</dbReference>
<dbReference type="GO" id="GO:0005737">
    <property type="term" value="C:cytoplasm"/>
    <property type="evidence" value="ECO:0007669"/>
    <property type="project" value="UniProtKB-SubCell"/>
</dbReference>
<dbReference type="GO" id="GO:0016151">
    <property type="term" value="F:nickel cation binding"/>
    <property type="evidence" value="ECO:0007669"/>
    <property type="project" value="InterPro"/>
</dbReference>
<dbReference type="GO" id="GO:0009039">
    <property type="term" value="F:urease activity"/>
    <property type="evidence" value="ECO:0007669"/>
    <property type="project" value="UniProtKB-UniRule"/>
</dbReference>
<dbReference type="GO" id="GO:0043419">
    <property type="term" value="P:urea catabolic process"/>
    <property type="evidence" value="ECO:0007669"/>
    <property type="project" value="UniProtKB-UniRule"/>
</dbReference>
<dbReference type="CDD" id="cd00390">
    <property type="entry name" value="Urease_gamma"/>
    <property type="match status" value="1"/>
</dbReference>
<dbReference type="Gene3D" id="3.30.280.10">
    <property type="entry name" value="Urease, gamma-like subunit"/>
    <property type="match status" value="1"/>
</dbReference>
<dbReference type="HAMAP" id="MF_00739">
    <property type="entry name" value="Urease_gamma"/>
    <property type="match status" value="1"/>
</dbReference>
<dbReference type="InterPro" id="IPR012010">
    <property type="entry name" value="Urease_gamma"/>
</dbReference>
<dbReference type="InterPro" id="IPR002026">
    <property type="entry name" value="Urease_gamma/gamma-beta_su"/>
</dbReference>
<dbReference type="InterPro" id="IPR036463">
    <property type="entry name" value="Urease_gamma_sf"/>
</dbReference>
<dbReference type="InterPro" id="IPR050069">
    <property type="entry name" value="Urease_subunit"/>
</dbReference>
<dbReference type="NCBIfam" id="NF009712">
    <property type="entry name" value="PRK13241.1"/>
    <property type="match status" value="1"/>
</dbReference>
<dbReference type="NCBIfam" id="TIGR00193">
    <property type="entry name" value="urease_gam"/>
    <property type="match status" value="1"/>
</dbReference>
<dbReference type="PANTHER" id="PTHR33569">
    <property type="entry name" value="UREASE"/>
    <property type="match status" value="1"/>
</dbReference>
<dbReference type="PANTHER" id="PTHR33569:SF1">
    <property type="entry name" value="UREASE"/>
    <property type="match status" value="1"/>
</dbReference>
<dbReference type="Pfam" id="PF00547">
    <property type="entry name" value="Urease_gamma"/>
    <property type="match status" value="1"/>
</dbReference>
<dbReference type="PIRSF" id="PIRSF001223">
    <property type="entry name" value="Urease_gamma"/>
    <property type="match status" value="1"/>
</dbReference>
<dbReference type="SUPFAM" id="SSF54111">
    <property type="entry name" value="Urease, gamma-subunit"/>
    <property type="match status" value="1"/>
</dbReference>